<gene>
    <name type="ordered locus">SpyM50438</name>
</gene>
<feature type="chain" id="PRO_1000069221" description="UPF0398 protein SpyM50438">
    <location>
        <begin position="1"/>
        <end position="171"/>
    </location>
</feature>
<organism>
    <name type="scientific">Streptococcus pyogenes serotype M5 (strain Manfredo)</name>
    <dbReference type="NCBI Taxonomy" id="160491"/>
    <lineage>
        <taxon>Bacteria</taxon>
        <taxon>Bacillati</taxon>
        <taxon>Bacillota</taxon>
        <taxon>Bacilli</taxon>
        <taxon>Lactobacillales</taxon>
        <taxon>Streptococcaceae</taxon>
        <taxon>Streptococcus</taxon>
    </lineage>
</organism>
<protein>
    <recommendedName>
        <fullName evidence="1">UPF0398 protein SpyM50438</fullName>
    </recommendedName>
</protein>
<name>Y438_STRPG</name>
<dbReference type="EMBL" id="AM295007">
    <property type="protein sequence ID" value="CAM29780.1"/>
    <property type="molecule type" value="Genomic_DNA"/>
</dbReference>
<dbReference type="RefSeq" id="WP_011018067.1">
    <property type="nucleotide sequence ID" value="NC_009332.1"/>
</dbReference>
<dbReference type="SMR" id="A2RD55"/>
<dbReference type="KEGG" id="spf:SpyM50438"/>
<dbReference type="HOGENOM" id="CLU_105319_0_0_9"/>
<dbReference type="Gene3D" id="3.40.50.450">
    <property type="match status" value="1"/>
</dbReference>
<dbReference type="HAMAP" id="MF_01575">
    <property type="entry name" value="UPF0398"/>
    <property type="match status" value="1"/>
</dbReference>
<dbReference type="InterPro" id="IPR010697">
    <property type="entry name" value="YspA"/>
</dbReference>
<dbReference type="NCBIfam" id="NF010181">
    <property type="entry name" value="PRK13660.1"/>
    <property type="match status" value="1"/>
</dbReference>
<dbReference type="PANTHER" id="PTHR38440:SF1">
    <property type="entry name" value="UPF0398 PROTEIN SPR0331"/>
    <property type="match status" value="1"/>
</dbReference>
<dbReference type="PANTHER" id="PTHR38440">
    <property type="entry name" value="UPF0398 PROTEIN YPSA"/>
    <property type="match status" value="1"/>
</dbReference>
<dbReference type="Pfam" id="PF06908">
    <property type="entry name" value="YpsA"/>
    <property type="match status" value="1"/>
</dbReference>
<dbReference type="PIRSF" id="PIRSF021290">
    <property type="entry name" value="DUF1273"/>
    <property type="match status" value="1"/>
</dbReference>
<dbReference type="SUPFAM" id="SSF102405">
    <property type="entry name" value="MCP/YpsA-like"/>
    <property type="match status" value="1"/>
</dbReference>
<reference key="1">
    <citation type="journal article" date="2007" name="J. Bacteriol.">
        <title>Complete genome of acute rheumatic fever-associated serotype M5 Streptococcus pyogenes strain Manfredo.</title>
        <authorList>
            <person name="Holden M.T.G."/>
            <person name="Scott A."/>
            <person name="Cherevach I."/>
            <person name="Chillingworth T."/>
            <person name="Churcher C."/>
            <person name="Cronin A."/>
            <person name="Dowd L."/>
            <person name="Feltwell T."/>
            <person name="Hamlin N."/>
            <person name="Holroyd S."/>
            <person name="Jagels K."/>
            <person name="Moule S."/>
            <person name="Mungall K."/>
            <person name="Quail M.A."/>
            <person name="Price C."/>
            <person name="Rabbinowitsch E."/>
            <person name="Sharp S."/>
            <person name="Skelton J."/>
            <person name="Whitehead S."/>
            <person name="Barrell B.G."/>
            <person name="Kehoe M."/>
            <person name="Parkhill J."/>
        </authorList>
    </citation>
    <scope>NUCLEOTIDE SEQUENCE [LARGE SCALE GENOMIC DNA]</scope>
    <source>
        <strain>Manfredo</strain>
    </source>
</reference>
<accession>A2RD55</accession>
<sequence>MTAILITGYRSFEIGIFDHKDPRVSIIKQAIRKDLIGYLENGVDWFIFTGNLGFEQWALEVANELKEEYPLQIATIFLFETHGDKWNEKNQEVLSQFKAVDFVKYYFPNYEQPTQFSQYYQFLLEKTEGAYVFYDTENETNLKYFLKKAKDMPHYQLLLLTFDRLNDMSQS</sequence>
<comment type="similarity">
    <text evidence="1">Belongs to the UPF0398 family.</text>
</comment>
<proteinExistence type="inferred from homology"/>
<evidence type="ECO:0000255" key="1">
    <source>
        <dbReference type="HAMAP-Rule" id="MF_01575"/>
    </source>
</evidence>